<name>PLAS_ULVPE</name>
<gene>
    <name type="primary">PETE</name>
</gene>
<organism>
    <name type="scientific">Ulva pertusa</name>
    <name type="common">Sea lettuce</name>
    <dbReference type="NCBI Taxonomy" id="3120"/>
    <lineage>
        <taxon>Eukaryota</taxon>
        <taxon>Viridiplantae</taxon>
        <taxon>Chlorophyta</taxon>
        <taxon>Ulvophyceae</taxon>
        <taxon>OUU clade</taxon>
        <taxon>Ulvales</taxon>
        <taxon>Ulvaceae</taxon>
        <taxon>Ulva</taxon>
    </lineage>
</organism>
<protein>
    <recommendedName>
        <fullName>Plastocyanin</fullName>
    </recommendedName>
</protein>
<comment type="function">
    <text evidence="1 3">Participates in electron transfer between P700 and the cytochrome b6-f complex in photosystem I (By similarity). Has antiviral activity against Potato virus Y (strain N) (Ref.1).</text>
</comment>
<comment type="cofactor">
    <cofactor evidence="2">
        <name>Cu(2+)</name>
        <dbReference type="ChEBI" id="CHEBI:29036"/>
    </cofactor>
</comment>
<comment type="subcellular location">
    <subcellularLocation>
        <location evidence="2">Plastid</location>
        <location evidence="2">Chloroplast thylakoid membrane</location>
        <topology evidence="1">Peripheral membrane protein</topology>
        <orientation evidence="1">Lumenal side</orientation>
    </subcellularLocation>
    <text>Loosely bound to the inner thylakoid membrane surface in chloroplasts (By similarity).</text>
</comment>
<comment type="similarity">
    <text evidence="4">Belongs to the plastocyanin family.</text>
</comment>
<sequence>AQIVKLGGDDGSLAFVPSKISVAAGEAIEFVNNAGFPHNIVFDEDAVPAGVDADAISYDDYLNSKGETVVRKLSTPGVYGVYCEPHAGAGMKMTITVQ</sequence>
<evidence type="ECO:0000250" key="1">
    <source>
        <dbReference type="UniProtKB" id="P18068"/>
    </source>
</evidence>
<evidence type="ECO:0000269" key="2">
    <source>
    </source>
</evidence>
<evidence type="ECO:0000269" key="3">
    <source ref="1"/>
</evidence>
<evidence type="ECO:0000305" key="4"/>
<evidence type="ECO:0007744" key="5">
    <source>
        <dbReference type="PDB" id="1IUZ"/>
    </source>
</evidence>
<evidence type="ECO:0007829" key="6">
    <source>
        <dbReference type="PDB" id="1IUZ"/>
    </source>
</evidence>
<keyword id="KW-0002">3D-structure</keyword>
<keyword id="KW-0051">Antiviral defense</keyword>
<keyword id="KW-0150">Chloroplast</keyword>
<keyword id="KW-0186">Copper</keyword>
<keyword id="KW-0903">Direct protein sequencing</keyword>
<keyword id="KW-0249">Electron transport</keyword>
<keyword id="KW-0472">Membrane</keyword>
<keyword id="KW-0479">Metal-binding</keyword>
<keyword id="KW-0934">Plastid</keyword>
<keyword id="KW-0793">Thylakoid</keyword>
<keyword id="KW-0813">Transport</keyword>
<reference key="1">
    <citation type="submission" date="2003-06" db="UniProtKB">
        <authorList>
            <person name="Liu Z."/>
            <person name="Wu Z."/>
            <person name="Lin Q."/>
            <person name="Xie L."/>
        </authorList>
    </citation>
    <scope>PROTEIN SEQUENCE OF 1-20</scope>
    <scope>ANTIVIRAL ACTIVITY</scope>
</reference>
<reference key="2">
    <citation type="journal article" date="1999" name="J. Biol. Chem.">
        <title>Novel insight into the copper-ligand geometry in the crystal structure of Ulva pertusa plastocyanin at 1.6-A resolution. Structural basis for regulation of the copper site by residue 88.</title>
        <authorList>
            <person name="Shibata N."/>
            <person name="Inoue T."/>
            <person name="Nagano C."/>
            <person name="Nishio N."/>
            <person name="Kohzuma T."/>
            <person name="Onodera K."/>
            <person name="Yoshizaki F."/>
            <person name="Sugimura Y."/>
            <person name="Kai Y."/>
        </authorList>
    </citation>
    <scope>X-RAY CRYSTALLOGRAPHY (1.6 ANGSTROMS) IN COMPLEX WITH COPPER</scope>
    <scope>COFACTOR</scope>
    <scope>SUBCELLULAR LOCATION</scope>
</reference>
<dbReference type="PDB" id="1IUZ">
    <property type="method" value="X-ray"/>
    <property type="resolution" value="1.60 A"/>
    <property type="chains" value="A=1-98"/>
</dbReference>
<dbReference type="PDBsum" id="1IUZ"/>
<dbReference type="SMR" id="P56274"/>
<dbReference type="EvolutionaryTrace" id="P56274"/>
<dbReference type="GO" id="GO:0009543">
    <property type="term" value="C:chloroplast thylakoid lumen"/>
    <property type="evidence" value="ECO:0007669"/>
    <property type="project" value="TreeGrafter"/>
</dbReference>
<dbReference type="GO" id="GO:0009535">
    <property type="term" value="C:chloroplast thylakoid membrane"/>
    <property type="evidence" value="ECO:0007669"/>
    <property type="project" value="UniProtKB-SubCell"/>
</dbReference>
<dbReference type="GO" id="GO:0005507">
    <property type="term" value="F:copper ion binding"/>
    <property type="evidence" value="ECO:0007669"/>
    <property type="project" value="InterPro"/>
</dbReference>
<dbReference type="GO" id="GO:0046028">
    <property type="term" value="F:electron transporter, transferring electrons from cytochrome b6/f complex of photosystem II activity"/>
    <property type="evidence" value="ECO:0007669"/>
    <property type="project" value="TreeGrafter"/>
</dbReference>
<dbReference type="GO" id="GO:0051607">
    <property type="term" value="P:defense response to virus"/>
    <property type="evidence" value="ECO:0007669"/>
    <property type="project" value="UniProtKB-KW"/>
</dbReference>
<dbReference type="CDD" id="cd04219">
    <property type="entry name" value="Plastocyanin"/>
    <property type="match status" value="1"/>
</dbReference>
<dbReference type="Gene3D" id="2.60.40.420">
    <property type="entry name" value="Cupredoxins - blue copper proteins"/>
    <property type="match status" value="1"/>
</dbReference>
<dbReference type="InterPro" id="IPR000923">
    <property type="entry name" value="BlueCu_1"/>
</dbReference>
<dbReference type="InterPro" id="IPR028871">
    <property type="entry name" value="BlueCu_1_BS"/>
</dbReference>
<dbReference type="InterPro" id="IPR001235">
    <property type="entry name" value="Copper_blue_Plastocyanin"/>
</dbReference>
<dbReference type="InterPro" id="IPR008972">
    <property type="entry name" value="Cupredoxin"/>
</dbReference>
<dbReference type="InterPro" id="IPR002387">
    <property type="entry name" value="Plastocyanin"/>
</dbReference>
<dbReference type="NCBIfam" id="TIGR02656">
    <property type="entry name" value="cyanin_plasto"/>
    <property type="match status" value="1"/>
</dbReference>
<dbReference type="PANTHER" id="PTHR34192">
    <property type="entry name" value="PLASTOCYANIN MAJOR ISOFORM, CHLOROPLASTIC-RELATED"/>
    <property type="match status" value="1"/>
</dbReference>
<dbReference type="PANTHER" id="PTHR34192:SF10">
    <property type="entry name" value="PLASTOCYANIN MAJOR ISOFORM, CHLOROPLASTIC-RELATED"/>
    <property type="match status" value="1"/>
</dbReference>
<dbReference type="Pfam" id="PF00127">
    <property type="entry name" value="Copper-bind"/>
    <property type="match status" value="1"/>
</dbReference>
<dbReference type="PRINTS" id="PR00156">
    <property type="entry name" value="COPPERBLUE"/>
</dbReference>
<dbReference type="PRINTS" id="PR00157">
    <property type="entry name" value="PLASTOCYANIN"/>
</dbReference>
<dbReference type="SUPFAM" id="SSF49503">
    <property type="entry name" value="Cupredoxins"/>
    <property type="match status" value="1"/>
</dbReference>
<dbReference type="PROSITE" id="PS00196">
    <property type="entry name" value="COPPER_BLUE"/>
    <property type="match status" value="1"/>
</dbReference>
<accession>P56274</accession>
<proteinExistence type="evidence at protein level"/>
<feature type="chain" id="PRO_0000085579" description="Plastocyanin">
    <location>
        <begin position="1"/>
        <end position="98"/>
    </location>
</feature>
<feature type="domain" description="Plastocyanin-like">
    <location>
        <begin position="1"/>
        <end position="98"/>
    </location>
</feature>
<feature type="binding site" evidence="2 5">
    <location>
        <position position="38"/>
    </location>
    <ligand>
        <name>Cu(2+)</name>
        <dbReference type="ChEBI" id="CHEBI:29036"/>
    </ligand>
</feature>
<feature type="binding site" evidence="2 5">
    <location>
        <position position="83"/>
    </location>
    <ligand>
        <name>Cu(2+)</name>
        <dbReference type="ChEBI" id="CHEBI:29036"/>
    </ligand>
</feature>
<feature type="binding site" evidence="2 5">
    <location>
        <position position="86"/>
    </location>
    <ligand>
        <name>Cu(2+)</name>
        <dbReference type="ChEBI" id="CHEBI:29036"/>
    </ligand>
</feature>
<feature type="binding site" evidence="2 5">
    <location>
        <position position="91"/>
    </location>
    <ligand>
        <name>Cu(2+)</name>
        <dbReference type="ChEBI" id="CHEBI:29036"/>
    </ligand>
</feature>
<feature type="sequence conflict" description="In Ref. 1; AA sequence." evidence="4" ref="1">
    <original>Q</original>
    <variation>A</variation>
    <location>
        <position position="2"/>
    </location>
</feature>
<feature type="strand" evidence="6">
    <location>
        <begin position="2"/>
        <end position="7"/>
    </location>
</feature>
<feature type="strand" evidence="6">
    <location>
        <begin position="14"/>
        <end position="23"/>
    </location>
</feature>
<feature type="strand" evidence="6">
    <location>
        <begin position="27"/>
        <end position="32"/>
    </location>
</feature>
<feature type="strand" evidence="6">
    <location>
        <begin position="38"/>
        <end position="42"/>
    </location>
</feature>
<feature type="helix" evidence="6">
    <location>
        <begin position="53"/>
        <end position="56"/>
    </location>
</feature>
<feature type="strand" evidence="6">
    <location>
        <begin position="58"/>
        <end position="62"/>
    </location>
</feature>
<feature type="strand" evidence="6">
    <location>
        <begin position="68"/>
        <end position="72"/>
    </location>
</feature>
<feature type="strand" evidence="6">
    <location>
        <begin position="77"/>
        <end position="82"/>
    </location>
</feature>
<feature type="turn" evidence="6">
    <location>
        <begin position="84"/>
        <end position="86"/>
    </location>
</feature>
<feature type="helix" evidence="6">
    <location>
        <begin position="87"/>
        <end position="89"/>
    </location>
</feature>
<feature type="strand" evidence="6">
    <location>
        <begin position="92"/>
        <end position="98"/>
    </location>
</feature>